<comment type="similarity">
    <text evidence="1">Belongs to the bacterial ribosomal protein bL32 family.</text>
</comment>
<proteinExistence type="inferred from homology"/>
<evidence type="ECO:0000255" key="1">
    <source>
        <dbReference type="HAMAP-Rule" id="MF_00340"/>
    </source>
</evidence>
<evidence type="ECO:0000256" key="2">
    <source>
        <dbReference type="SAM" id="MobiDB-lite"/>
    </source>
</evidence>
<evidence type="ECO:0000305" key="3"/>
<organism>
    <name type="scientific">Shewanella frigidimarina (strain NCIMB 400)</name>
    <dbReference type="NCBI Taxonomy" id="318167"/>
    <lineage>
        <taxon>Bacteria</taxon>
        <taxon>Pseudomonadati</taxon>
        <taxon>Pseudomonadota</taxon>
        <taxon>Gammaproteobacteria</taxon>
        <taxon>Alteromonadales</taxon>
        <taxon>Shewanellaceae</taxon>
        <taxon>Shewanella</taxon>
    </lineage>
</organism>
<name>RL32_SHEFN</name>
<reference key="1">
    <citation type="submission" date="2006-08" db="EMBL/GenBank/DDBJ databases">
        <title>Complete sequence of Shewanella frigidimarina NCIMB 400.</title>
        <authorList>
            <consortium name="US DOE Joint Genome Institute"/>
            <person name="Copeland A."/>
            <person name="Lucas S."/>
            <person name="Lapidus A."/>
            <person name="Barry K."/>
            <person name="Detter J.C."/>
            <person name="Glavina del Rio T."/>
            <person name="Hammon N."/>
            <person name="Israni S."/>
            <person name="Dalin E."/>
            <person name="Tice H."/>
            <person name="Pitluck S."/>
            <person name="Fredrickson J.K."/>
            <person name="Kolker E."/>
            <person name="McCuel L.A."/>
            <person name="DiChristina T."/>
            <person name="Nealson K.H."/>
            <person name="Newman D."/>
            <person name="Tiedje J.M."/>
            <person name="Zhou J."/>
            <person name="Romine M.F."/>
            <person name="Culley D.E."/>
            <person name="Serres M."/>
            <person name="Chertkov O."/>
            <person name="Brettin T."/>
            <person name="Bruce D."/>
            <person name="Han C."/>
            <person name="Tapia R."/>
            <person name="Gilna P."/>
            <person name="Schmutz J."/>
            <person name="Larimer F."/>
            <person name="Land M."/>
            <person name="Hauser L."/>
            <person name="Kyrpides N."/>
            <person name="Mikhailova N."/>
            <person name="Richardson P."/>
        </authorList>
    </citation>
    <scope>NUCLEOTIDE SEQUENCE [LARGE SCALE GENOMIC DNA]</scope>
    <source>
        <strain>NCIMB 400</strain>
    </source>
</reference>
<protein>
    <recommendedName>
        <fullName evidence="1">Large ribosomal subunit protein bL32</fullName>
    </recommendedName>
    <alternativeName>
        <fullName evidence="3">50S ribosomal protein L32</fullName>
    </alternativeName>
</protein>
<keyword id="KW-1185">Reference proteome</keyword>
<keyword id="KW-0687">Ribonucleoprotein</keyword>
<keyword id="KW-0689">Ribosomal protein</keyword>
<sequence length="56" mass="6297">MAVQQNKKSRSKRGMRRSHDSLSTAQLSVDATSGELHLRHNVTADGFYRGKKVINK</sequence>
<dbReference type="EMBL" id="CP000447">
    <property type="protein sequence ID" value="ABI71346.1"/>
    <property type="molecule type" value="Genomic_DNA"/>
</dbReference>
<dbReference type="RefSeq" id="WP_011636967.1">
    <property type="nucleotide sequence ID" value="NC_008345.1"/>
</dbReference>
<dbReference type="SMR" id="Q084G9"/>
<dbReference type="STRING" id="318167.Sfri_1495"/>
<dbReference type="GeneID" id="90568804"/>
<dbReference type="KEGG" id="sfr:Sfri_1495"/>
<dbReference type="eggNOG" id="COG0333">
    <property type="taxonomic scope" value="Bacteria"/>
</dbReference>
<dbReference type="HOGENOM" id="CLU_129084_2_1_6"/>
<dbReference type="OrthoDB" id="9801927at2"/>
<dbReference type="Proteomes" id="UP000000684">
    <property type="component" value="Chromosome"/>
</dbReference>
<dbReference type="GO" id="GO:0015934">
    <property type="term" value="C:large ribosomal subunit"/>
    <property type="evidence" value="ECO:0007669"/>
    <property type="project" value="InterPro"/>
</dbReference>
<dbReference type="GO" id="GO:0003735">
    <property type="term" value="F:structural constituent of ribosome"/>
    <property type="evidence" value="ECO:0007669"/>
    <property type="project" value="InterPro"/>
</dbReference>
<dbReference type="GO" id="GO:0006412">
    <property type="term" value="P:translation"/>
    <property type="evidence" value="ECO:0007669"/>
    <property type="project" value="UniProtKB-UniRule"/>
</dbReference>
<dbReference type="HAMAP" id="MF_00340">
    <property type="entry name" value="Ribosomal_bL32"/>
    <property type="match status" value="1"/>
</dbReference>
<dbReference type="InterPro" id="IPR002677">
    <property type="entry name" value="Ribosomal_bL32"/>
</dbReference>
<dbReference type="InterPro" id="IPR044957">
    <property type="entry name" value="Ribosomal_bL32_bact"/>
</dbReference>
<dbReference type="InterPro" id="IPR011332">
    <property type="entry name" value="Ribosomal_zn-bd"/>
</dbReference>
<dbReference type="NCBIfam" id="TIGR01031">
    <property type="entry name" value="rpmF_bact"/>
    <property type="match status" value="1"/>
</dbReference>
<dbReference type="PANTHER" id="PTHR35534">
    <property type="entry name" value="50S RIBOSOMAL PROTEIN L32"/>
    <property type="match status" value="1"/>
</dbReference>
<dbReference type="PANTHER" id="PTHR35534:SF1">
    <property type="entry name" value="LARGE RIBOSOMAL SUBUNIT PROTEIN BL32"/>
    <property type="match status" value="1"/>
</dbReference>
<dbReference type="Pfam" id="PF01783">
    <property type="entry name" value="Ribosomal_L32p"/>
    <property type="match status" value="1"/>
</dbReference>
<dbReference type="SUPFAM" id="SSF57829">
    <property type="entry name" value="Zn-binding ribosomal proteins"/>
    <property type="match status" value="1"/>
</dbReference>
<feature type="chain" id="PRO_0000296560" description="Large ribosomal subunit protein bL32">
    <location>
        <begin position="1"/>
        <end position="56"/>
    </location>
</feature>
<feature type="region of interest" description="Disordered" evidence="2">
    <location>
        <begin position="1"/>
        <end position="34"/>
    </location>
</feature>
<feature type="compositionally biased region" description="Basic residues" evidence="2">
    <location>
        <begin position="7"/>
        <end position="16"/>
    </location>
</feature>
<feature type="compositionally biased region" description="Polar residues" evidence="2">
    <location>
        <begin position="21"/>
        <end position="31"/>
    </location>
</feature>
<accession>Q084G9</accession>
<gene>
    <name evidence="1" type="primary">rpmF</name>
    <name type="ordered locus">Sfri_1495</name>
</gene>